<comment type="similarity">
    <text evidence="1">Belongs to the papillomaviridae E4 protein family.</text>
</comment>
<accession>Q02266</accession>
<organism>
    <name type="scientific">Pygmy chimpanzee papillomavirus type 1</name>
    <name type="common">PCPV-1</name>
    <dbReference type="NCBI Taxonomy" id="10576"/>
    <lineage>
        <taxon>Viruses</taxon>
        <taxon>Monodnaviria</taxon>
        <taxon>Shotokuvirae</taxon>
        <taxon>Cossaviricota</taxon>
        <taxon>Papovaviricetes</taxon>
        <taxon>Zurhausenvirales</taxon>
        <taxon>Papillomaviridae</taxon>
        <taxon>Firstpapillomavirinae</taxon>
        <taxon>Alphapapillomavirus</taxon>
        <taxon>Alphapapillomavirus 10</taxon>
    </lineage>
</organism>
<gene>
    <name type="primary">E4</name>
</gene>
<sequence length="108" mass="12062">MTAKLYVLLHLYLVLCKKYPLLGLLHTPQPPLHRPPAQCHPSPQKIVCKRRPINDFEDPPTVLENSKTPLTLCVPRTVEPWTVKTTSTITITTTTTSNGTTVTVVVHL</sequence>
<keyword id="KW-0244">Early protein</keyword>
<keyword id="KW-1185">Reference proteome</keyword>
<reference key="1">
    <citation type="journal article" date="1992" name="Virology">
        <title>Human papillomavirus type 13 and pygmy chimpanzee papillomavirus type 1: comparison of the genome organizations.</title>
        <authorList>
            <person name="van Ranst M."/>
            <person name="Fuse A."/>
            <person name="Fiten P."/>
            <person name="Beuken E."/>
            <person name="Pfister H."/>
            <person name="Burk R.D."/>
            <person name="Opdenakker G."/>
        </authorList>
    </citation>
    <scope>NUCLEOTIDE SEQUENCE [GENOMIC DNA]</scope>
</reference>
<organismHost>
    <name type="scientific">Pan paniscus</name>
    <name type="common">Pygmy chimpanzee</name>
    <name type="synonym">Bonobo</name>
    <dbReference type="NCBI Taxonomy" id="9597"/>
</organismHost>
<evidence type="ECO:0000305" key="1"/>
<feature type="chain" id="PRO_0000133282" description="Probable protein E4">
    <location>
        <begin position="1"/>
        <end position="108"/>
    </location>
</feature>
<proteinExistence type="inferred from homology"/>
<protein>
    <recommendedName>
        <fullName>Probable protein E4</fullName>
    </recommendedName>
</protein>
<dbReference type="EMBL" id="X62844">
    <property type="protein sequence ID" value="CAA44659.1"/>
    <property type="molecule type" value="Genomic_DNA"/>
</dbReference>
<dbReference type="Proteomes" id="UP000000469">
    <property type="component" value="Genome"/>
</dbReference>
<dbReference type="InterPro" id="IPR003861">
    <property type="entry name" value="Papilloma_E4"/>
</dbReference>
<dbReference type="Pfam" id="PF02711">
    <property type="entry name" value="Pap_E4"/>
    <property type="match status" value="1"/>
</dbReference>
<name>VE4_PCPV1</name>